<organism>
    <name type="scientific">Chlorobium phaeobacteroides (strain DSM 266 / SMG 266 / 2430)</name>
    <dbReference type="NCBI Taxonomy" id="290317"/>
    <lineage>
        <taxon>Bacteria</taxon>
        <taxon>Pseudomonadati</taxon>
        <taxon>Chlorobiota</taxon>
        <taxon>Chlorobiia</taxon>
        <taxon>Chlorobiales</taxon>
        <taxon>Chlorobiaceae</taxon>
        <taxon>Chlorobium/Pelodictyon group</taxon>
        <taxon>Chlorobium</taxon>
    </lineage>
</organism>
<name>AROK_CHLPD</name>
<keyword id="KW-0028">Amino-acid biosynthesis</keyword>
<keyword id="KW-0057">Aromatic amino acid biosynthesis</keyword>
<keyword id="KW-0067">ATP-binding</keyword>
<keyword id="KW-0963">Cytoplasm</keyword>
<keyword id="KW-0418">Kinase</keyword>
<keyword id="KW-0460">Magnesium</keyword>
<keyword id="KW-0479">Metal-binding</keyword>
<keyword id="KW-0547">Nucleotide-binding</keyword>
<keyword id="KW-1185">Reference proteome</keyword>
<keyword id="KW-0808">Transferase</keyword>
<reference key="1">
    <citation type="submission" date="2006-12" db="EMBL/GenBank/DDBJ databases">
        <title>Complete sequence of Chlorobium phaeobacteroides DSM 266.</title>
        <authorList>
            <consortium name="US DOE Joint Genome Institute"/>
            <person name="Copeland A."/>
            <person name="Lucas S."/>
            <person name="Lapidus A."/>
            <person name="Barry K."/>
            <person name="Detter J.C."/>
            <person name="Glavina del Rio T."/>
            <person name="Hammon N."/>
            <person name="Israni S."/>
            <person name="Pitluck S."/>
            <person name="Goltsman E."/>
            <person name="Schmutz J."/>
            <person name="Larimer F."/>
            <person name="Land M."/>
            <person name="Hauser L."/>
            <person name="Mikhailova N."/>
            <person name="Li T."/>
            <person name="Overmann J."/>
            <person name="Bryant D.A."/>
            <person name="Richardson P."/>
        </authorList>
    </citation>
    <scope>NUCLEOTIDE SEQUENCE [LARGE SCALE GENOMIC DNA]</scope>
    <source>
        <strain>DSM 266 / SMG 266 / 2430</strain>
    </source>
</reference>
<accession>A1BER1</accession>
<sequence length="190" mass="21029">MKHHSLIFLTGFSGSGKSTIGPLLANSLGYDFIDLDQAIEAITGKSVSRIFAEEGESYFRKLELDTLKTVTNREELIVSLGGGALESNECYTLIKEKGTLVYLKSGSGTLTKRLCHKTDRPLLKSEQGGKLSNGEIEQKIRELLARREPRYNSATITVQTDTGRIGSTVEELTRKINRYVRKTTGNSRAK</sequence>
<comment type="function">
    <text evidence="1">Catalyzes the specific phosphorylation of the 3-hydroxyl group of shikimic acid using ATP as a cosubstrate.</text>
</comment>
<comment type="catalytic activity">
    <reaction evidence="1">
        <text>shikimate + ATP = 3-phosphoshikimate + ADP + H(+)</text>
        <dbReference type="Rhea" id="RHEA:13121"/>
        <dbReference type="ChEBI" id="CHEBI:15378"/>
        <dbReference type="ChEBI" id="CHEBI:30616"/>
        <dbReference type="ChEBI" id="CHEBI:36208"/>
        <dbReference type="ChEBI" id="CHEBI:145989"/>
        <dbReference type="ChEBI" id="CHEBI:456216"/>
        <dbReference type="EC" id="2.7.1.71"/>
    </reaction>
</comment>
<comment type="cofactor">
    <cofactor evidence="1">
        <name>Mg(2+)</name>
        <dbReference type="ChEBI" id="CHEBI:18420"/>
    </cofactor>
    <text evidence="1">Binds 1 Mg(2+) ion per subunit.</text>
</comment>
<comment type="pathway">
    <text evidence="1">Metabolic intermediate biosynthesis; chorismate biosynthesis; chorismate from D-erythrose 4-phosphate and phosphoenolpyruvate: step 5/7.</text>
</comment>
<comment type="subunit">
    <text evidence="1">Monomer.</text>
</comment>
<comment type="subcellular location">
    <subcellularLocation>
        <location evidence="1">Cytoplasm</location>
    </subcellularLocation>
</comment>
<comment type="similarity">
    <text evidence="1">Belongs to the shikimate kinase family.</text>
</comment>
<gene>
    <name evidence="1" type="primary">aroK</name>
    <name type="ordered locus">Cpha266_0837</name>
</gene>
<dbReference type="EC" id="2.7.1.71" evidence="1"/>
<dbReference type="EMBL" id="CP000492">
    <property type="protein sequence ID" value="ABL64888.1"/>
    <property type="molecule type" value="Genomic_DNA"/>
</dbReference>
<dbReference type="RefSeq" id="WP_011744716.1">
    <property type="nucleotide sequence ID" value="NC_008639.1"/>
</dbReference>
<dbReference type="SMR" id="A1BER1"/>
<dbReference type="STRING" id="290317.Cpha266_0837"/>
<dbReference type="KEGG" id="cph:Cpha266_0837"/>
<dbReference type="eggNOG" id="COG0703">
    <property type="taxonomic scope" value="Bacteria"/>
</dbReference>
<dbReference type="HOGENOM" id="CLU_057607_4_0_10"/>
<dbReference type="OrthoDB" id="9800332at2"/>
<dbReference type="UniPathway" id="UPA00053">
    <property type="reaction ID" value="UER00088"/>
</dbReference>
<dbReference type="Proteomes" id="UP000008701">
    <property type="component" value="Chromosome"/>
</dbReference>
<dbReference type="GO" id="GO:0005829">
    <property type="term" value="C:cytosol"/>
    <property type="evidence" value="ECO:0007669"/>
    <property type="project" value="TreeGrafter"/>
</dbReference>
<dbReference type="GO" id="GO:0005524">
    <property type="term" value="F:ATP binding"/>
    <property type="evidence" value="ECO:0007669"/>
    <property type="project" value="UniProtKB-UniRule"/>
</dbReference>
<dbReference type="GO" id="GO:0000287">
    <property type="term" value="F:magnesium ion binding"/>
    <property type="evidence" value="ECO:0007669"/>
    <property type="project" value="UniProtKB-UniRule"/>
</dbReference>
<dbReference type="GO" id="GO:0004765">
    <property type="term" value="F:shikimate kinase activity"/>
    <property type="evidence" value="ECO:0007669"/>
    <property type="project" value="UniProtKB-UniRule"/>
</dbReference>
<dbReference type="GO" id="GO:0008652">
    <property type="term" value="P:amino acid biosynthetic process"/>
    <property type="evidence" value="ECO:0007669"/>
    <property type="project" value="UniProtKB-KW"/>
</dbReference>
<dbReference type="GO" id="GO:0009073">
    <property type="term" value="P:aromatic amino acid family biosynthetic process"/>
    <property type="evidence" value="ECO:0007669"/>
    <property type="project" value="UniProtKB-KW"/>
</dbReference>
<dbReference type="GO" id="GO:0009423">
    <property type="term" value="P:chorismate biosynthetic process"/>
    <property type="evidence" value="ECO:0007669"/>
    <property type="project" value="UniProtKB-UniRule"/>
</dbReference>
<dbReference type="CDD" id="cd00464">
    <property type="entry name" value="SK"/>
    <property type="match status" value="1"/>
</dbReference>
<dbReference type="Gene3D" id="3.40.50.300">
    <property type="entry name" value="P-loop containing nucleotide triphosphate hydrolases"/>
    <property type="match status" value="1"/>
</dbReference>
<dbReference type="HAMAP" id="MF_00109">
    <property type="entry name" value="Shikimate_kinase"/>
    <property type="match status" value="1"/>
</dbReference>
<dbReference type="InterPro" id="IPR027417">
    <property type="entry name" value="P-loop_NTPase"/>
</dbReference>
<dbReference type="InterPro" id="IPR031322">
    <property type="entry name" value="Shikimate/glucono_kinase"/>
</dbReference>
<dbReference type="InterPro" id="IPR000623">
    <property type="entry name" value="Shikimate_kinase/TSH1"/>
</dbReference>
<dbReference type="InterPro" id="IPR023000">
    <property type="entry name" value="Shikimate_kinase_CS"/>
</dbReference>
<dbReference type="PANTHER" id="PTHR21087">
    <property type="entry name" value="SHIKIMATE KINASE"/>
    <property type="match status" value="1"/>
</dbReference>
<dbReference type="PANTHER" id="PTHR21087:SF16">
    <property type="entry name" value="SHIKIMATE KINASE 1, CHLOROPLASTIC"/>
    <property type="match status" value="1"/>
</dbReference>
<dbReference type="Pfam" id="PF01202">
    <property type="entry name" value="SKI"/>
    <property type="match status" value="1"/>
</dbReference>
<dbReference type="PRINTS" id="PR01100">
    <property type="entry name" value="SHIKIMTKNASE"/>
</dbReference>
<dbReference type="SUPFAM" id="SSF52540">
    <property type="entry name" value="P-loop containing nucleoside triphosphate hydrolases"/>
    <property type="match status" value="1"/>
</dbReference>
<dbReference type="PROSITE" id="PS01128">
    <property type="entry name" value="SHIKIMATE_KINASE"/>
    <property type="match status" value="1"/>
</dbReference>
<protein>
    <recommendedName>
        <fullName evidence="1">Shikimate kinase</fullName>
        <shortName evidence="1">SK</shortName>
        <ecNumber evidence="1">2.7.1.71</ecNumber>
    </recommendedName>
</protein>
<evidence type="ECO:0000255" key="1">
    <source>
        <dbReference type="HAMAP-Rule" id="MF_00109"/>
    </source>
</evidence>
<proteinExistence type="inferred from homology"/>
<feature type="chain" id="PRO_1000057722" description="Shikimate kinase">
    <location>
        <begin position="1"/>
        <end position="190"/>
    </location>
</feature>
<feature type="binding site" evidence="1">
    <location>
        <begin position="14"/>
        <end position="19"/>
    </location>
    <ligand>
        <name>ATP</name>
        <dbReference type="ChEBI" id="CHEBI:30616"/>
    </ligand>
</feature>
<feature type="binding site" evidence="1">
    <location>
        <position position="18"/>
    </location>
    <ligand>
        <name>Mg(2+)</name>
        <dbReference type="ChEBI" id="CHEBI:18420"/>
    </ligand>
</feature>
<feature type="binding site" evidence="1">
    <location>
        <position position="36"/>
    </location>
    <ligand>
        <name>substrate</name>
    </ligand>
</feature>
<feature type="binding site" evidence="1">
    <location>
        <position position="60"/>
    </location>
    <ligand>
        <name>substrate</name>
    </ligand>
</feature>
<feature type="binding site" evidence="1">
    <location>
        <position position="82"/>
    </location>
    <ligand>
        <name>substrate</name>
    </ligand>
</feature>
<feature type="binding site" evidence="1">
    <location>
        <position position="120"/>
    </location>
    <ligand>
        <name>ATP</name>
        <dbReference type="ChEBI" id="CHEBI:30616"/>
    </ligand>
</feature>
<feature type="binding site" evidence="1">
    <location>
        <position position="147"/>
    </location>
    <ligand>
        <name>substrate</name>
    </ligand>
</feature>